<comment type="function">
    <text evidence="1">Dorsalizing factor. Key developmental protein that dorsalizes early vertebrate embryonic tissues by binding to ventralizing TGF-beta family bone morphogenetic proteins (BMPs) and sequestering them in latent complexes (By similarity).</text>
</comment>
<comment type="subunit">
    <text evidence="1">Interacts with TWSG1 and/or BMP4.</text>
</comment>
<comment type="interaction">
    <interactant intactId="EBI-947551">
        <id>Q9H2X0</id>
    </interactant>
    <interactant intactId="EBI-10173507">
        <id>Q6UY14-3</id>
        <label>ADAMTSL4</label>
    </interactant>
    <organismsDiffer>false</organismsDiffer>
    <experiments>3</experiments>
</comment>
<comment type="interaction">
    <interactant intactId="EBI-947551">
        <id>Q9H2X0</id>
    </interactant>
    <interactant intactId="EBI-489827">
        <id>P13497</id>
        <label>BMP1</label>
    </interactant>
    <organismsDiffer>false</organismsDiffer>
    <experiments>2</experiments>
</comment>
<comment type="interaction">
    <interactant intactId="EBI-947551">
        <id>Q9H2X0</id>
    </interactant>
    <interactant intactId="EBI-744545">
        <id>Q8NEC5</id>
        <label>CATSPER1</label>
    </interactant>
    <organismsDiffer>false</organismsDiffer>
    <experiments>3</experiments>
</comment>
<comment type="interaction">
    <interactant intactId="EBI-947551">
        <id>Q9H2X0</id>
    </interactant>
    <interactant intactId="EBI-12593838">
        <id>Q6WN34-2</id>
        <label>CHRDL2</label>
    </interactant>
    <organismsDiffer>false</organismsDiffer>
    <experiments>3</experiments>
</comment>
<comment type="interaction">
    <interactant intactId="EBI-947551">
        <id>Q9H2X0</id>
    </interactant>
    <interactant intactId="EBI-3867333">
        <id>A8MQ03</id>
        <label>CYSRT1</label>
    </interactant>
    <organismsDiffer>false</organismsDiffer>
    <experiments>3</experiments>
</comment>
<comment type="interaction">
    <interactant intactId="EBI-947551">
        <id>Q9H2X0</id>
    </interactant>
    <interactant intactId="EBI-9090198">
        <id>P15976-2</id>
        <label>GATA1</label>
    </interactant>
    <organismsDiffer>false</organismsDiffer>
    <experiments>3</experiments>
</comment>
<comment type="interaction">
    <interactant intactId="EBI-947551">
        <id>Q9H2X0</id>
    </interactant>
    <interactant intactId="EBI-740785">
        <id>P49639</id>
        <label>HOXA1</label>
    </interactant>
    <organismsDiffer>false</organismsDiffer>
    <experiments>4</experiments>
</comment>
<comment type="interaction">
    <interactant intactId="EBI-947551">
        <id>Q9H2X0</id>
    </interactant>
    <interactant intactId="EBI-6509505">
        <id>Q0VD86</id>
        <label>INCA1</label>
    </interactant>
    <organismsDiffer>false</organismsDiffer>
    <experiments>3</experiments>
</comment>
<comment type="interaction">
    <interactant intactId="EBI-947551">
        <id>Q9H2X0</id>
    </interactant>
    <interactant intactId="EBI-1047093">
        <id>O76011</id>
        <label>KRT34</label>
    </interactant>
    <organismsDiffer>false</organismsDiffer>
    <experiments>3</experiments>
</comment>
<comment type="interaction">
    <interactant intactId="EBI-947551">
        <id>Q9H2X0</id>
    </interactant>
    <interactant intactId="EBI-11959885">
        <id>Q07627</id>
        <label>KRTAP1-1</label>
    </interactant>
    <organismsDiffer>false</organismsDiffer>
    <experiments>3</experiments>
</comment>
<comment type="interaction">
    <interactant intactId="EBI-947551">
        <id>Q9H2X0</id>
    </interactant>
    <interactant intactId="EBI-11749135">
        <id>Q8IUG1</id>
        <label>KRTAP1-3</label>
    </interactant>
    <organismsDiffer>false</organismsDiffer>
    <experiments>3</experiments>
</comment>
<comment type="interaction">
    <interactant intactId="EBI-947551">
        <id>Q9H2X0</id>
    </interactant>
    <interactant intactId="EBI-10172150">
        <id>P60370</id>
        <label>KRTAP10-5</label>
    </interactant>
    <organismsDiffer>false</organismsDiffer>
    <experiments>3</experiments>
</comment>
<comment type="interaction">
    <interactant intactId="EBI-947551">
        <id>Q9H2X0</id>
    </interactant>
    <interactant intactId="EBI-10172290">
        <id>P60409</id>
        <label>KRTAP10-7</label>
    </interactant>
    <organismsDiffer>false</organismsDiffer>
    <experiments>6</experiments>
</comment>
<comment type="interaction">
    <interactant intactId="EBI-947551">
        <id>Q9H2X0</id>
    </interactant>
    <interactant intactId="EBI-10171774">
        <id>P60410</id>
        <label>KRTAP10-8</label>
    </interactant>
    <organismsDiffer>false</organismsDiffer>
    <experiments>6</experiments>
</comment>
<comment type="interaction">
    <interactant intactId="EBI-947551">
        <id>Q9H2X0</id>
    </interactant>
    <interactant intactId="EBI-10172052">
        <id>P60411</id>
        <label>KRTAP10-9</label>
    </interactant>
    <organismsDiffer>false</organismsDiffer>
    <experiments>3</experiments>
</comment>
<comment type="interaction">
    <interactant intactId="EBI-947551">
        <id>Q9H2X0</id>
    </interactant>
    <interactant intactId="EBI-10210845">
        <id>P59990</id>
        <label>KRTAP12-1</label>
    </interactant>
    <organismsDiffer>false</organismsDiffer>
    <experiments>3</experiments>
</comment>
<comment type="interaction">
    <interactant intactId="EBI-947551">
        <id>Q9H2X0</id>
    </interactant>
    <interactant intactId="EBI-10176379">
        <id>P59991</id>
        <label>KRTAP12-2</label>
    </interactant>
    <organismsDiffer>false</organismsDiffer>
    <experiments>3</experiments>
</comment>
<comment type="interaction">
    <interactant intactId="EBI-947551">
        <id>Q9H2X0</id>
    </interactant>
    <interactant intactId="EBI-11953334">
        <id>P60328</id>
        <label>KRTAP12-3</label>
    </interactant>
    <organismsDiffer>false</organismsDiffer>
    <experiments>3</experiments>
</comment>
<comment type="interaction">
    <interactant intactId="EBI-947551">
        <id>Q9H2X0</id>
    </interactant>
    <interactant intactId="EBI-12196745">
        <id>Q3LHN2</id>
        <label>KRTAP19-2</label>
    </interactant>
    <organismsDiffer>false</organismsDiffer>
    <experiments>3</experiments>
</comment>
<comment type="interaction">
    <interactant intactId="EBI-947551">
        <id>Q9H2X0</id>
    </interactant>
    <interactant intactId="EBI-1048945">
        <id>Q3LI72</id>
        <label>KRTAP19-5</label>
    </interactant>
    <organismsDiffer>false</organismsDiffer>
    <experiments>3</experiments>
</comment>
<comment type="interaction">
    <interactant intactId="EBI-947551">
        <id>Q9H2X0</id>
    </interactant>
    <interactant intactId="EBI-739863">
        <id>Q9BQ66</id>
        <label>KRTAP4-12</label>
    </interactant>
    <organismsDiffer>false</organismsDiffer>
    <experiments>3</experiments>
</comment>
<comment type="interaction">
    <interactant intactId="EBI-947551">
        <id>Q9H2X0</id>
    </interactant>
    <interactant intactId="EBI-10172511">
        <id>Q9BYR5</id>
        <label>KRTAP4-2</label>
    </interactant>
    <organismsDiffer>false</organismsDiffer>
    <experiments>6</experiments>
</comment>
<comment type="interaction">
    <interactant intactId="EBI-947551">
        <id>Q9H2X0</id>
    </interactant>
    <interactant intactId="EBI-3958099">
        <id>P26371</id>
        <label>KRTAP5-9</label>
    </interactant>
    <organismsDiffer>false</organismsDiffer>
    <experiments>6</experiments>
</comment>
<comment type="interaction">
    <interactant intactId="EBI-947551">
        <id>Q9H2X0</id>
    </interactant>
    <interactant intactId="EBI-22311199">
        <id>Q3LI67</id>
        <label>KRTAP6-3</label>
    </interactant>
    <organismsDiffer>false</organismsDiffer>
    <experiments>3</experiments>
</comment>
<comment type="interaction">
    <interactant intactId="EBI-947551">
        <id>Q9H2X0</id>
    </interactant>
    <interactant intactId="EBI-1044640">
        <id>Q9BYQ4</id>
        <label>KRTAP9-2</label>
    </interactant>
    <organismsDiffer>false</organismsDiffer>
    <experiments>3</experiments>
</comment>
<comment type="interaction">
    <interactant intactId="EBI-947551">
        <id>Q9H2X0</id>
    </interactant>
    <interactant intactId="EBI-1043191">
        <id>Q9BYQ3</id>
        <label>KRTAP9-3</label>
    </interactant>
    <organismsDiffer>false</organismsDiffer>
    <experiments>3</experiments>
</comment>
<comment type="interaction">
    <interactant intactId="EBI-947551">
        <id>Q9H2X0</id>
    </interactant>
    <interactant intactId="EBI-12224199">
        <id>Q5T751</id>
        <label>LCE1C</label>
    </interactant>
    <organismsDiffer>false</organismsDiffer>
    <experiments>3</experiments>
</comment>
<comment type="interaction">
    <interactant intactId="EBI-947551">
        <id>Q9H2X0</id>
    </interactant>
    <interactant intactId="EBI-11958008">
        <id>Q5T754</id>
        <label>LCE1F</label>
    </interactant>
    <organismsDiffer>false</organismsDiffer>
    <experiments>3</experiments>
</comment>
<comment type="interaction">
    <interactant intactId="EBI-947551">
        <id>Q9H2X0</id>
    </interactant>
    <interactant intactId="EBI-11955689">
        <id>Q5TCM9</id>
        <label>LCE5A</label>
    </interactant>
    <organismsDiffer>false</organismsDiffer>
    <experiments>3</experiments>
</comment>
<comment type="interaction">
    <interactant intactId="EBI-947551">
        <id>Q9H2X0</id>
    </interactant>
    <interactant intactId="EBI-2513988">
        <id>O14910</id>
        <label>LIN7A</label>
    </interactant>
    <organismsDiffer>false</organismsDiffer>
    <experiments>3</experiments>
</comment>
<comment type="interaction">
    <interactant intactId="EBI-947551">
        <id>Q9H2X0</id>
    </interactant>
    <interactant intactId="EBI-748397">
        <id>P50222</id>
        <label>MEOX2</label>
    </interactant>
    <organismsDiffer>false</organismsDiffer>
    <experiments>3</experiments>
</comment>
<comment type="interaction">
    <interactant intactId="EBI-947551">
        <id>Q9H2X0</id>
    </interactant>
    <interactant intactId="EBI-16439278">
        <id>Q6FHY5</id>
        <label>MEOX2</label>
    </interactant>
    <organismsDiffer>false</organismsDiffer>
    <experiments>3</experiments>
</comment>
<comment type="interaction">
    <interactant intactId="EBI-947551">
        <id>Q9H2X0</id>
    </interactant>
    <interactant intactId="EBI-945833">
        <id>Q7Z3S9</id>
        <label>NOTCH2NLA</label>
    </interactant>
    <organismsDiffer>false</organismsDiffer>
    <experiments>3</experiments>
</comment>
<comment type="interaction">
    <interactant intactId="EBI-947551">
        <id>Q9H2X0</id>
    </interactant>
    <interactant intactId="EBI-22310682">
        <id>P0DPK4</id>
        <label>NOTCH2NLC</label>
    </interactant>
    <organismsDiffer>false</organismsDiffer>
    <experiments>3</experiments>
</comment>
<comment type="interaction">
    <interactant intactId="EBI-947551">
        <id>Q9H2X0</id>
    </interactant>
    <interactant intactId="EBI-13644623">
        <id>Q92570</id>
        <label>NR4A3</label>
    </interactant>
    <organismsDiffer>false</organismsDiffer>
    <experiments>3</experiments>
</comment>
<comment type="interaction">
    <interactant intactId="EBI-947551">
        <id>Q9H2X0</id>
    </interactant>
    <interactant intactId="EBI-740446">
        <id>P32242</id>
        <label>OTX1</label>
    </interactant>
    <organismsDiffer>false</organismsDiffer>
    <experiments>3</experiments>
</comment>
<comment type="interaction">
    <interactant intactId="EBI-947551">
        <id>Q9H2X0</id>
    </interactant>
    <interactant intactId="EBI-740019">
        <id>O15162</id>
        <label>PLSCR1</label>
    </interactant>
    <organismsDiffer>false</organismsDiffer>
    <experiments>3</experiments>
</comment>
<comment type="interaction">
    <interactant intactId="EBI-947551">
        <id>Q9H2X0</id>
    </interactant>
    <interactant intactId="EBI-17236143">
        <id>Q12837</id>
        <label>POU4F2</label>
    </interactant>
    <organismsDiffer>false</organismsDiffer>
    <experiments>3</experiments>
</comment>
<comment type="interaction">
    <interactant intactId="EBI-947551">
        <id>Q9H2X0</id>
    </interactant>
    <interactant intactId="EBI-3918154">
        <id>Q9UGC6</id>
        <label>RGS17</label>
    </interactant>
    <organismsDiffer>false</organismsDiffer>
    <experiments>3</experiments>
</comment>
<comment type="interaction">
    <interactant intactId="EBI-947551">
        <id>Q9H2X0</id>
    </interactant>
    <interactant intactId="EBI-12806032">
        <id>Q16348</id>
        <label>SLC15A2</label>
    </interactant>
    <organismsDiffer>false</organismsDiffer>
    <experiments>3</experiments>
</comment>
<comment type="interaction">
    <interactant intactId="EBI-947551">
        <id>Q9H2X0</id>
    </interactant>
    <interactant intactId="EBI-347161">
        <id>P84022</id>
        <label>SMAD3</label>
    </interactant>
    <organismsDiffer>false</organismsDiffer>
    <experiments>2</experiments>
</comment>
<comment type="interaction">
    <interactant intactId="EBI-947551">
        <id>Q9H2X0</id>
    </interactant>
    <interactant intactId="EBI-3866665">
        <id>O43609</id>
        <label>SPRY1</label>
    </interactant>
    <organismsDiffer>false</organismsDiffer>
    <experiments>3</experiments>
</comment>
<comment type="interaction">
    <interactant intactId="EBI-947551">
        <id>Q9H2X0</id>
    </interactant>
    <interactant intactId="EBI-742487">
        <id>O43597</id>
        <label>SPRY2</label>
    </interactant>
    <organismsDiffer>false</organismsDiffer>
    <experiments>3</experiments>
</comment>
<comment type="interaction">
    <interactant intactId="EBI-947551">
        <id>Q9H2X0</id>
    </interactant>
    <interactant intactId="EBI-12290641">
        <id>O43610</id>
        <label>SPRY3</label>
    </interactant>
    <organismsDiffer>false</organismsDiffer>
    <experiments>3</experiments>
</comment>
<comment type="interaction">
    <interactant intactId="EBI-947551">
        <id>Q9H2X0</id>
    </interactant>
    <interactant intactId="EBI-5235829">
        <id>Q8IWZ5</id>
        <label>TRIM42</label>
    </interactant>
    <organismsDiffer>false</organismsDiffer>
    <experiments>5</experiments>
</comment>
<comment type="interaction">
    <interactant intactId="EBI-947551">
        <id>Q9H2X0</id>
    </interactant>
    <interactant intactId="EBI-8652667">
        <id>O14817</id>
        <label>TSPAN4</label>
    </interactant>
    <organismsDiffer>false</organismsDiffer>
    <experiments>3</experiments>
</comment>
<comment type="subcellular location">
    <subcellularLocation>
        <location evidence="1">Secreted</location>
    </subcellularLocation>
</comment>
<comment type="alternative products">
    <event type="alternative splicing"/>
    <isoform>
        <id>Q9H2X0-1</id>
        <name>1</name>
        <sequence type="displayed"/>
    </isoform>
    <isoform>
        <id>Q9H2X0-2</id>
        <name>2</name>
        <sequence type="described" ref="VSP_001069 VSP_001070"/>
    </isoform>
    <isoform>
        <id>Q9H2X0-3</id>
        <name>3</name>
        <sequence type="described" ref="VSP_001071 VSP_001072"/>
    </isoform>
    <isoform>
        <id>Q9H2X0-4</id>
        <name>4</name>
        <sequence type="described" ref="VSP_001073 VSP_001074"/>
    </isoform>
    <isoform>
        <id>Q9H2X0-5</id>
        <name>5</name>
        <sequence type="described" ref="VSP_001075"/>
    </isoform>
    <text>Experimental confirmation may be lacking for some isoforms.</text>
</comment>
<comment type="tissue specificity">
    <text>Expressed at the highest level in liver.</text>
</comment>
<comment type="PTM">
    <text evidence="1">Cleaved by tolloid proteases; cleavage participates in dorsoventral patterning during early development.</text>
</comment>
<comment type="miscellaneous">
    <molecule>Isoform 2</molecule>
    <text evidence="10">May be produced at very low levels due to a premature stop codon in the mRNA, leading to nonsense-mediated mRNA decay.</text>
</comment>
<comment type="miscellaneous">
    <molecule>Isoform 3</molecule>
    <text evidence="10">May be produced at very low levels due to a premature stop codon in the mRNA, leading to nonsense-mediated mRNA decay.</text>
</comment>
<comment type="miscellaneous">
    <molecule>Isoform 4</molecule>
    <text evidence="10">May be produced at very low levels due to a premature stop codon in the mRNA, leading to nonsense-mediated mRNA decay.</text>
</comment>
<comment type="similarity">
    <text evidence="10">Belongs to the chordin family.</text>
</comment>
<evidence type="ECO:0000250" key="1"/>
<evidence type="ECO:0000255" key="2"/>
<evidence type="ECO:0000255" key="3">
    <source>
        <dbReference type="PROSITE-ProRule" id="PRU00220"/>
    </source>
</evidence>
<evidence type="ECO:0000255" key="4">
    <source>
        <dbReference type="PROSITE-ProRule" id="PRU00230"/>
    </source>
</evidence>
<evidence type="ECO:0000256" key="5">
    <source>
        <dbReference type="SAM" id="MobiDB-lite"/>
    </source>
</evidence>
<evidence type="ECO:0000269" key="6">
    <source>
    </source>
</evidence>
<evidence type="ECO:0000269" key="7">
    <source>
    </source>
</evidence>
<evidence type="ECO:0000303" key="8">
    <source>
    </source>
</evidence>
<evidence type="ECO:0000303" key="9">
    <source>
    </source>
</evidence>
<evidence type="ECO:0000305" key="10"/>
<protein>
    <recommendedName>
        <fullName>Chordin</fullName>
    </recommendedName>
</protein>
<gene>
    <name type="primary">CHRD</name>
    <name type="ORF">UNQ217/PRO243</name>
</gene>
<feature type="signal peptide" evidence="2">
    <location>
        <begin position="1"/>
        <end position="26"/>
    </location>
</feature>
<feature type="chain" id="PRO_0000005364" description="Chordin">
    <location>
        <begin position="27"/>
        <end position="955"/>
    </location>
</feature>
<feature type="domain" description="VWFC 1" evidence="3">
    <location>
        <begin position="49"/>
        <end position="126"/>
    </location>
</feature>
<feature type="domain" description="CHRD 1" evidence="4">
    <location>
        <begin position="168"/>
        <end position="277"/>
    </location>
</feature>
<feature type="domain" description="CHRD 2" evidence="4">
    <location>
        <begin position="279"/>
        <end position="402"/>
    </location>
</feature>
<feature type="domain" description="CHRD 3" evidence="4">
    <location>
        <begin position="403"/>
        <end position="524"/>
    </location>
</feature>
<feature type="domain" description="CHRD 4" evidence="4">
    <location>
        <begin position="530"/>
        <end position="650"/>
    </location>
</feature>
<feature type="domain" description="VWFC 2" evidence="3">
    <location>
        <begin position="703"/>
        <end position="763"/>
    </location>
</feature>
<feature type="domain" description="VWFC 3" evidence="3">
    <location>
        <begin position="784"/>
        <end position="850"/>
    </location>
</feature>
<feature type="domain" description="VWFC 4" evidence="3">
    <location>
        <begin position="872"/>
        <end position="932"/>
    </location>
</feature>
<feature type="region of interest" description="Disordered" evidence="5">
    <location>
        <begin position="124"/>
        <end position="168"/>
    </location>
</feature>
<feature type="region of interest" description="Disordered" evidence="5">
    <location>
        <begin position="675"/>
        <end position="703"/>
    </location>
</feature>
<feature type="region of interest" description="Disordered" evidence="5">
    <location>
        <begin position="934"/>
        <end position="955"/>
    </location>
</feature>
<feature type="compositionally biased region" description="Polar residues" evidence="5">
    <location>
        <begin position="125"/>
        <end position="138"/>
    </location>
</feature>
<feature type="compositionally biased region" description="Basic and acidic residues" evidence="5">
    <location>
        <begin position="143"/>
        <end position="168"/>
    </location>
</feature>
<feature type="compositionally biased region" description="Basic and acidic residues" evidence="5">
    <location>
        <begin position="938"/>
        <end position="955"/>
    </location>
</feature>
<feature type="glycosylation site" description="N-linked (GlcNAc...) asparagine" evidence="2">
    <location>
        <position position="217"/>
    </location>
</feature>
<feature type="glycosylation site" description="N-linked (GlcNAc...) asparagine" evidence="2">
    <location>
        <position position="351"/>
    </location>
</feature>
<feature type="glycosylation site" description="N-linked (GlcNAc...) asparagine" evidence="2">
    <location>
        <position position="365"/>
    </location>
</feature>
<feature type="glycosylation site" description="N-linked (GlcNAc...) asparagine" evidence="2">
    <location>
        <position position="434"/>
    </location>
</feature>
<feature type="splice variant" id="VSP_001071" description="In isoform 3." evidence="8">
    <original>PQWGRRTRGP</original>
    <variation>TGTLRPREMK</variation>
    <location>
        <begin position="85"/>
        <end position="94"/>
    </location>
</feature>
<feature type="splice variant" id="VSP_001069" description="In isoform 2." evidence="8">
    <original>PQ</original>
    <variation>GP</variation>
    <location>
        <begin position="85"/>
        <end position="86"/>
    </location>
</feature>
<feature type="splice variant" id="VSP_001070" description="In isoform 2." evidence="8">
    <location>
        <begin position="87"/>
        <end position="955"/>
    </location>
</feature>
<feature type="splice variant" id="VSP_001072" description="In isoform 3." evidence="8">
    <location>
        <begin position="95"/>
        <end position="955"/>
    </location>
</feature>
<feature type="splice variant" id="VSP_001073" description="In isoform 4." evidence="8">
    <original>GLTQVPLRLQILHQGQLLRELQA</original>
    <variation>DSTPGAATARTSGQCLSPGTRLC</variation>
    <location>
        <begin position="328"/>
        <end position="350"/>
    </location>
</feature>
<feature type="splice variant" id="VSP_001074" description="In isoform 4." evidence="8">
    <location>
        <begin position="351"/>
        <end position="955"/>
    </location>
</feature>
<feature type="splice variant" id="VSP_001075" description="In isoform 5." evidence="9">
    <location>
        <begin position="441"/>
        <end position="480"/>
    </location>
</feature>
<feature type="sequence variant" id="VAR_048727" description="In dbSNP:rs34095724.">
    <original>P</original>
    <variation>S</variation>
    <location>
        <position position="94"/>
    </location>
</feature>
<feature type="sequence variant" id="VAR_021517" description="In dbSNP:rs16858780." evidence="6 7">
    <original>M</original>
    <variation>L</variation>
    <location>
        <position position="630"/>
    </location>
</feature>
<feature type="sequence conflict" description="In Ref. 2; AAQ89285." evidence="10" ref="2">
    <original>E</original>
    <variation>Q</variation>
    <location>
        <position position="70"/>
    </location>
</feature>
<feature type="sequence conflict" description="In Ref. 4; AAC69835." evidence="10" ref="4">
    <original>RQLP</original>
    <variation>QVAA</variation>
    <location>
        <begin position="115"/>
        <end position="118"/>
    </location>
</feature>
<feature type="sequence conflict" description="In Ref. 4; AAC69835." evidence="10" ref="4">
    <original>V</original>
    <variation>A</variation>
    <location>
        <position position="189"/>
    </location>
</feature>
<feature type="sequence conflict" description="In Ref. 4; AAC69835." evidence="10" ref="4">
    <original>S</original>
    <variation>P</variation>
    <location>
        <position position="216"/>
    </location>
</feature>
<feature type="sequence conflict" description="In Ref. 4; AAC69835." evidence="10" ref="4">
    <original>T</original>
    <variation>P</variation>
    <location>
        <position position="674"/>
    </location>
</feature>
<feature type="sequence conflict" description="In Ref. 2; AAQ89285." evidence="10" ref="2">
    <location>
        <position position="939"/>
    </location>
</feature>
<dbReference type="EMBL" id="AF209928">
    <property type="protein sequence ID" value="AAG35767.1"/>
    <property type="molecule type" value="mRNA"/>
</dbReference>
<dbReference type="EMBL" id="AF209929">
    <property type="protein sequence ID" value="AAG35768.1"/>
    <property type="molecule type" value="mRNA"/>
</dbReference>
<dbReference type="EMBL" id="AF209930">
    <property type="protein sequence ID" value="AAG35769.1"/>
    <property type="molecule type" value="mRNA"/>
</dbReference>
<dbReference type="EMBL" id="AF283325">
    <property type="protein sequence ID" value="AAG35784.1"/>
    <property type="molecule type" value="mRNA"/>
</dbReference>
<dbReference type="EMBL" id="AY358926">
    <property type="protein sequence ID" value="AAQ89285.1"/>
    <property type="molecule type" value="mRNA"/>
</dbReference>
<dbReference type="EMBL" id="BC112345">
    <property type="protein sequence ID" value="AAI12346.1"/>
    <property type="molecule type" value="mRNA"/>
</dbReference>
<dbReference type="EMBL" id="AF076612">
    <property type="protein sequence ID" value="AAC69835.1"/>
    <property type="molecule type" value="mRNA"/>
</dbReference>
<dbReference type="EMBL" id="AF136632">
    <property type="protein sequence ID" value="AAF70236.1"/>
    <property type="molecule type" value="Genomic_DNA"/>
</dbReference>
<dbReference type="EMBL" id="AF136633">
    <property type="protein sequence ID" value="AAF70237.1"/>
    <property type="molecule type" value="Genomic_DNA"/>
</dbReference>
<dbReference type="EMBL" id="AF136634">
    <property type="protein sequence ID" value="AAF70238.1"/>
    <property type="molecule type" value="Genomic_DNA"/>
</dbReference>
<dbReference type="EMBL" id="AF136635">
    <property type="protein sequence ID" value="AAF70239.1"/>
    <property type="molecule type" value="Genomic_DNA"/>
</dbReference>
<dbReference type="CCDS" id="CCDS3266.1">
    <molecule id="Q9H2X0-1"/>
</dbReference>
<dbReference type="RefSeq" id="NP_001291401.1">
    <property type="nucleotide sequence ID" value="NM_001304472.1"/>
</dbReference>
<dbReference type="RefSeq" id="NP_001291402.1">
    <property type="nucleotide sequence ID" value="NM_001304473.1"/>
</dbReference>
<dbReference type="RefSeq" id="NP_001291403.1">
    <property type="nucleotide sequence ID" value="NM_001304474.1"/>
</dbReference>
<dbReference type="RefSeq" id="NP_003732.2">
    <molecule id="Q9H2X0-1"/>
    <property type="nucleotide sequence ID" value="NM_003741.3"/>
</dbReference>
<dbReference type="SMR" id="Q9H2X0"/>
<dbReference type="BioGRID" id="114198">
    <property type="interactions" value="122"/>
</dbReference>
<dbReference type="DIP" id="DIP-48857N"/>
<dbReference type="FunCoup" id="Q9H2X0">
    <property type="interactions" value="306"/>
</dbReference>
<dbReference type="IntAct" id="Q9H2X0">
    <property type="interactions" value="89"/>
</dbReference>
<dbReference type="MINT" id="Q9H2X0"/>
<dbReference type="STRING" id="9606.ENSP00000204604"/>
<dbReference type="GlyCosmos" id="Q9H2X0">
    <property type="glycosylation" value="4 sites, No reported glycans"/>
</dbReference>
<dbReference type="GlyGen" id="Q9H2X0">
    <property type="glycosylation" value="6 sites"/>
</dbReference>
<dbReference type="iPTMnet" id="Q9H2X0"/>
<dbReference type="PhosphoSitePlus" id="Q9H2X0"/>
<dbReference type="BioMuta" id="CHRD"/>
<dbReference type="DMDM" id="118572631"/>
<dbReference type="jPOST" id="Q9H2X0"/>
<dbReference type="MassIVE" id="Q9H2X0"/>
<dbReference type="PaxDb" id="9606-ENSP00000204604"/>
<dbReference type="PeptideAtlas" id="Q9H2X0"/>
<dbReference type="ProteomicsDB" id="80611">
    <molecule id="Q9H2X0-1"/>
</dbReference>
<dbReference type="ProteomicsDB" id="80612">
    <molecule id="Q9H2X0-2"/>
</dbReference>
<dbReference type="ProteomicsDB" id="80613">
    <molecule id="Q9H2X0-3"/>
</dbReference>
<dbReference type="ProteomicsDB" id="80614">
    <molecule id="Q9H2X0-4"/>
</dbReference>
<dbReference type="ProteomicsDB" id="80615">
    <molecule id="Q9H2X0-5"/>
</dbReference>
<dbReference type="Antibodypedia" id="33823">
    <property type="antibodies" value="261 antibodies from 27 providers"/>
</dbReference>
<dbReference type="DNASU" id="8646"/>
<dbReference type="Ensembl" id="ENST00000204604.6">
    <molecule id="Q9H2X0-1"/>
    <property type="protein sequence ID" value="ENSP00000204604.1"/>
    <property type="gene ID" value="ENSG00000090539.16"/>
</dbReference>
<dbReference type="Ensembl" id="ENST00000348986.3">
    <molecule id="Q9H2X0-5"/>
    <property type="protein sequence ID" value="ENSP00000334036.4"/>
    <property type="gene ID" value="ENSG00000090539.16"/>
</dbReference>
<dbReference type="Ensembl" id="ENST00000356534.7">
    <molecule id="Q9H2X0-2"/>
    <property type="protein sequence ID" value="ENSP00000348930.3"/>
    <property type="gene ID" value="ENSG00000090539.16"/>
</dbReference>
<dbReference type="Ensembl" id="ENST00000420973.5">
    <molecule id="Q9H2X0-4"/>
    <property type="protein sequence ID" value="ENSP00000392794.1"/>
    <property type="gene ID" value="ENSG00000090539.16"/>
</dbReference>
<dbReference type="Ensembl" id="ENST00000448472.5">
    <molecule id="Q9H2X0-3"/>
    <property type="protein sequence ID" value="ENSP00000408624.1"/>
    <property type="gene ID" value="ENSG00000090539.16"/>
</dbReference>
<dbReference type="GeneID" id="8646"/>
<dbReference type="KEGG" id="hsa:8646"/>
<dbReference type="MANE-Select" id="ENST00000204604.6">
    <property type="protein sequence ID" value="ENSP00000204604.1"/>
    <property type="RefSeq nucleotide sequence ID" value="NM_003741.4"/>
    <property type="RefSeq protein sequence ID" value="NP_003732.2"/>
</dbReference>
<dbReference type="UCSC" id="uc003fov.3">
    <molecule id="Q9H2X0-1"/>
    <property type="organism name" value="human"/>
</dbReference>
<dbReference type="AGR" id="HGNC:1949"/>
<dbReference type="CTD" id="8646"/>
<dbReference type="DisGeNET" id="8646"/>
<dbReference type="GeneCards" id="CHRD"/>
<dbReference type="HGNC" id="HGNC:1949">
    <property type="gene designation" value="CHRD"/>
</dbReference>
<dbReference type="HPA" id="ENSG00000090539">
    <property type="expression patterns" value="Tissue enhanced (brain, liver)"/>
</dbReference>
<dbReference type="MIM" id="603475">
    <property type="type" value="gene"/>
</dbReference>
<dbReference type="neXtProt" id="NX_Q9H2X0"/>
<dbReference type="OpenTargets" id="ENSG00000090539"/>
<dbReference type="PharmGKB" id="PA26482"/>
<dbReference type="VEuPathDB" id="HostDB:ENSG00000090539"/>
<dbReference type="eggNOG" id="ENOG502QR4J">
    <property type="taxonomic scope" value="Eukaryota"/>
</dbReference>
<dbReference type="GeneTree" id="ENSGT00940000161767"/>
<dbReference type="HOGENOM" id="CLU_2497257_0_0_1"/>
<dbReference type="InParanoid" id="Q9H2X0"/>
<dbReference type="OMA" id="TGRFTFH"/>
<dbReference type="OrthoDB" id="9829321at2759"/>
<dbReference type="PAN-GO" id="Q9H2X0">
    <property type="GO annotations" value="4 GO annotations based on evolutionary models"/>
</dbReference>
<dbReference type="PhylomeDB" id="Q9H2X0"/>
<dbReference type="TreeFam" id="TF106451"/>
<dbReference type="PathwayCommons" id="Q9H2X0"/>
<dbReference type="SignaLink" id="Q9H2X0"/>
<dbReference type="BioGRID-ORCS" id="8646">
    <property type="hits" value="17 hits in 1146 CRISPR screens"/>
</dbReference>
<dbReference type="GenomeRNAi" id="8646"/>
<dbReference type="Pharos" id="Q9H2X0">
    <property type="development level" value="Tbio"/>
</dbReference>
<dbReference type="PRO" id="PR:Q9H2X0"/>
<dbReference type="Proteomes" id="UP000005640">
    <property type="component" value="Chromosome 3"/>
</dbReference>
<dbReference type="RNAct" id="Q9H2X0">
    <property type="molecule type" value="protein"/>
</dbReference>
<dbReference type="Bgee" id="ENSG00000090539">
    <property type="expression patterns" value="Expressed in right lobe of liver and 117 other cell types or tissues"/>
</dbReference>
<dbReference type="ExpressionAtlas" id="Q9H2X0">
    <property type="expression patterns" value="baseline and differential"/>
</dbReference>
<dbReference type="GO" id="GO:0005615">
    <property type="term" value="C:extracellular space"/>
    <property type="evidence" value="ECO:0000318"/>
    <property type="project" value="GO_Central"/>
</dbReference>
<dbReference type="GO" id="GO:0036122">
    <property type="term" value="F:BMP binding"/>
    <property type="evidence" value="ECO:0000318"/>
    <property type="project" value="GO_Central"/>
</dbReference>
<dbReference type="GO" id="GO:0019955">
    <property type="term" value="F:cytokine binding"/>
    <property type="evidence" value="ECO:0000303"/>
    <property type="project" value="BHF-UCL"/>
</dbReference>
<dbReference type="GO" id="GO:0030509">
    <property type="term" value="P:BMP signaling pathway"/>
    <property type="evidence" value="ECO:0000315"/>
    <property type="project" value="BHF-UCL"/>
</dbReference>
<dbReference type="GO" id="GO:0009953">
    <property type="term" value="P:dorsal/ventral pattern formation"/>
    <property type="evidence" value="ECO:0000318"/>
    <property type="project" value="GO_Central"/>
</dbReference>
<dbReference type="GO" id="GO:0033504">
    <property type="term" value="P:floor plate development"/>
    <property type="evidence" value="ECO:0000304"/>
    <property type="project" value="BHF-UCL"/>
</dbReference>
<dbReference type="GO" id="GO:0030514">
    <property type="term" value="P:negative regulation of BMP signaling pathway"/>
    <property type="evidence" value="ECO:0000315"/>
    <property type="project" value="BHF-UCL"/>
</dbReference>
<dbReference type="GO" id="GO:0030336">
    <property type="term" value="P:negative regulation of cell migration"/>
    <property type="evidence" value="ECO:0000314"/>
    <property type="project" value="BHF-UCL"/>
</dbReference>
<dbReference type="GO" id="GO:0045668">
    <property type="term" value="P:negative regulation of osteoblast differentiation"/>
    <property type="evidence" value="ECO:0000315"/>
    <property type="project" value="BHF-UCL"/>
</dbReference>
<dbReference type="GO" id="GO:0045785">
    <property type="term" value="P:positive regulation of cell adhesion"/>
    <property type="evidence" value="ECO:0000314"/>
    <property type="project" value="BHF-UCL"/>
</dbReference>
<dbReference type="GO" id="GO:0002053">
    <property type="term" value="P:positive regulation of mesenchymal cell proliferation"/>
    <property type="evidence" value="ECO:0000315"/>
    <property type="project" value="BHF-UCL"/>
</dbReference>
<dbReference type="GO" id="GO:0001501">
    <property type="term" value="P:skeletal system development"/>
    <property type="evidence" value="ECO:0000304"/>
    <property type="project" value="UniProtKB"/>
</dbReference>
<dbReference type="GO" id="GO:0021513">
    <property type="term" value="P:spinal cord dorsal/ventral patterning"/>
    <property type="evidence" value="ECO:0000315"/>
    <property type="project" value="BHF-UCL"/>
</dbReference>
<dbReference type="Gene3D" id="6.20.200.20">
    <property type="match status" value="1"/>
</dbReference>
<dbReference type="InterPro" id="IPR016353">
    <property type="entry name" value="Chordin"/>
</dbReference>
<dbReference type="InterPro" id="IPR052278">
    <property type="entry name" value="Chordin-like_regulators"/>
</dbReference>
<dbReference type="InterPro" id="IPR010895">
    <property type="entry name" value="CHRD"/>
</dbReference>
<dbReference type="InterPro" id="IPR001007">
    <property type="entry name" value="VWF_dom"/>
</dbReference>
<dbReference type="PANTHER" id="PTHR46526">
    <property type="entry name" value="CHORDIN"/>
    <property type="match status" value="1"/>
</dbReference>
<dbReference type="PANTHER" id="PTHR46526:SF1">
    <property type="entry name" value="CHORDIN"/>
    <property type="match status" value="1"/>
</dbReference>
<dbReference type="Pfam" id="PF07452">
    <property type="entry name" value="CHRD"/>
    <property type="match status" value="3"/>
</dbReference>
<dbReference type="Pfam" id="PF00093">
    <property type="entry name" value="VWC"/>
    <property type="match status" value="3"/>
</dbReference>
<dbReference type="PIRSF" id="PIRSF002496">
    <property type="entry name" value="Chordin"/>
    <property type="match status" value="1"/>
</dbReference>
<dbReference type="SMART" id="SM00754">
    <property type="entry name" value="CHRD"/>
    <property type="match status" value="4"/>
</dbReference>
<dbReference type="SMART" id="SM00214">
    <property type="entry name" value="VWC"/>
    <property type="match status" value="4"/>
</dbReference>
<dbReference type="SUPFAM" id="SSF57603">
    <property type="entry name" value="FnI-like domain"/>
    <property type="match status" value="4"/>
</dbReference>
<dbReference type="PROSITE" id="PS50933">
    <property type="entry name" value="CHRD"/>
    <property type="match status" value="4"/>
</dbReference>
<dbReference type="PROSITE" id="PS01208">
    <property type="entry name" value="VWFC_1"/>
    <property type="match status" value="2"/>
</dbReference>
<dbReference type="PROSITE" id="PS50184">
    <property type="entry name" value="VWFC_2"/>
    <property type="match status" value="2"/>
</dbReference>
<reference key="1">
    <citation type="journal article" date="2001" name="Mech. Dev.">
        <title>The human chordin gene encodes several differentially expressed spliced variants with distinct BMP opposing activities.</title>
        <authorList>
            <person name="Millet C."/>
            <person name="Lemaire P."/>
            <person name="Orsetti B."/>
            <person name="Guglielmi P."/>
            <person name="Francois V."/>
        </authorList>
    </citation>
    <scope>NUCLEOTIDE SEQUENCE [MRNA] (ISOFORMS 1; 2; 3 AND 4)</scope>
    <scope>VARIANT LEU-630</scope>
</reference>
<reference key="2">
    <citation type="journal article" date="2003" name="Genome Res.">
        <title>The secreted protein discovery initiative (SPDI), a large-scale effort to identify novel human secreted and transmembrane proteins: a bioinformatics assessment.</title>
        <authorList>
            <person name="Clark H.F."/>
            <person name="Gurney A.L."/>
            <person name="Abaya E."/>
            <person name="Baker K."/>
            <person name="Baldwin D.T."/>
            <person name="Brush J."/>
            <person name="Chen J."/>
            <person name="Chow B."/>
            <person name="Chui C."/>
            <person name="Crowley C."/>
            <person name="Currell B."/>
            <person name="Deuel B."/>
            <person name="Dowd P."/>
            <person name="Eaton D."/>
            <person name="Foster J.S."/>
            <person name="Grimaldi C."/>
            <person name="Gu Q."/>
            <person name="Hass P.E."/>
            <person name="Heldens S."/>
            <person name="Huang A."/>
            <person name="Kim H.S."/>
            <person name="Klimowski L."/>
            <person name="Jin Y."/>
            <person name="Johnson S."/>
            <person name="Lee J."/>
            <person name="Lewis L."/>
            <person name="Liao D."/>
            <person name="Mark M.R."/>
            <person name="Robbie E."/>
            <person name="Sanchez C."/>
            <person name="Schoenfeld J."/>
            <person name="Seshagiri S."/>
            <person name="Simmons L."/>
            <person name="Singh J."/>
            <person name="Smith V."/>
            <person name="Stinson J."/>
            <person name="Vagts A."/>
            <person name="Vandlen R.L."/>
            <person name="Watanabe C."/>
            <person name="Wieand D."/>
            <person name="Woods K."/>
            <person name="Xie M.-H."/>
            <person name="Yansura D.G."/>
            <person name="Yi S."/>
            <person name="Yu G."/>
            <person name="Yuan J."/>
            <person name="Zhang M."/>
            <person name="Zhang Z."/>
            <person name="Goddard A.D."/>
            <person name="Wood W.I."/>
            <person name="Godowski P.J."/>
            <person name="Gray A.M."/>
        </authorList>
    </citation>
    <scope>NUCLEOTIDE SEQUENCE [LARGE SCALE MRNA] (ISOFORM 1)</scope>
</reference>
<reference key="3">
    <citation type="journal article" date="2004" name="Genome Res.">
        <title>The status, quality, and expansion of the NIH full-length cDNA project: the Mammalian Gene Collection (MGC).</title>
        <authorList>
            <consortium name="The MGC Project Team"/>
        </authorList>
    </citation>
    <scope>NUCLEOTIDE SEQUENCE [LARGE SCALE MRNA] (ISOFORM 1)</scope>
</reference>
<reference key="4">
    <citation type="journal article" date="1998" name="Genomics">
        <title>Coding sequence and expression patterns of mouse chordin and mapping of the cognate mouse chrd and human CHRD genes.</title>
        <authorList>
            <person name="Pappano W.N."/>
            <person name="Scott I.C."/>
            <person name="Clark T.G."/>
            <person name="Eddy R.L."/>
            <person name="Shows T.B."/>
            <person name="Greenspan D.S."/>
        </authorList>
    </citation>
    <scope>NUCLEOTIDE SEQUENCE [MRNA] OF 115-955 (ISOFORM 5)</scope>
    <scope>VARIANT LEU-630</scope>
</reference>
<reference key="5">
    <citation type="journal article" date="2000" name="Development">
        <title>BMP-binding modules in chordin: a model for signalling regulation in the extracellular space.</title>
        <authorList>
            <person name="Larrain J."/>
            <person name="Bachiller D."/>
            <person name="Lu B."/>
            <person name="Agius E."/>
            <person name="Piccolo S."/>
            <person name="De Robertis E.M."/>
        </authorList>
    </citation>
    <scope>NUCLEOTIDE SEQUENCE [GENOMIC DNA] OF 51-125; 705-762; 784-850 AND 872-932</scope>
</reference>
<reference key="6">
    <citation type="journal article" date="2004" name="Genome Biol.">
        <title>An unappreciated role for RNA surveillance.</title>
        <authorList>
            <person name="Hillman R.T."/>
            <person name="Green R.E."/>
            <person name="Brenner S.E."/>
        </authorList>
    </citation>
    <scope>SPLICE ISOFORM(S) THAT ARE POTENTIAL NMD TARGET(S)</scope>
</reference>
<organism>
    <name type="scientific">Homo sapiens</name>
    <name type="common">Human</name>
    <dbReference type="NCBI Taxonomy" id="9606"/>
    <lineage>
        <taxon>Eukaryota</taxon>
        <taxon>Metazoa</taxon>
        <taxon>Chordata</taxon>
        <taxon>Craniata</taxon>
        <taxon>Vertebrata</taxon>
        <taxon>Euteleostomi</taxon>
        <taxon>Mammalia</taxon>
        <taxon>Eutheria</taxon>
        <taxon>Euarchontoglires</taxon>
        <taxon>Primates</taxon>
        <taxon>Haplorrhini</taxon>
        <taxon>Catarrhini</taxon>
        <taxon>Hominidae</taxon>
        <taxon>Homo</taxon>
    </lineage>
</organism>
<sequence>MPSLPAPPAPLLLLGLLLLGSRPARGAGPEPPVLPIRSEKEPLPVRGAAGCTFGGKVYALDETWHPDLGEPFGVMRCVLCACEAPQWGRRTRGPGRVSCKNIKPECPTPACGQPRQLPGHCCQTCPQERSSSERQPSGLSFEYPRDPEHRSYSDRGEPGAEERARGDGHTDFVALLTGPRSQAVARARVSLLRSSLRFSISYRRLDRPTRIRFSDSNGSVLFEHPAAPTQDGLVCGVWRAVPRLSLRLLRAEQLHVALVTLTHPSGEVWGPLIRHRALAAETFSAILTLEGPPQQGVGGITLLTLSDTEDSLHFLLLFRGLLEPRSGGLTQVPLRLQILHQGQLLRELQANVSAQEPGFAEVLPNLTVQEMDWLVLGELQMALEWAGRPGLRISGHIAARKSCDVLQSVLCGADALIPVQTGAAGSASLTLLGNGSLIYQVQVVGTSSEVVAMTLETKPQRRDQRTVLCHMAGLQPGGHTAVGICPGLGARGAHMLLQNELFLNVGTKDFPDGELRGHVAALPYCGHSARHDTLPVPLAGALVLPPVKSQAAGHAWLSLDTHCHLHYEVLLAGLGGSEQGTVTAHLLGPPGTPGPRRLLKGFYGSEAQGVVKDLEPELLRHLAKGMASLMITTKGSPRGELRGQVHIANQCEVGGLRLEAAGAEGVRALGAPDTASAAPPVVPGLPALAPAKPGGPGRPRDPNTCFFEGQQRPHGARWAPNYDPLCSLCTCQRRTVICDPVVCPPPSCPHPVQAPDQCCPVCPEKQDVRDLPGLPRSRDPGEGCYFDGDRSWRAAGTRWHPVVPPFGLIKCAVCTCKGGTGEVHCEKVQCPRLACAQPVRVNPTDCCKQCPVGSGAHPQLGDPMQADGPRGCRFAGQWFPESQSWHPSVPPFGEMSCITCRCGAGVPHCERDDCSLPLSCGSGKESRCCSRCTAHRRPAPETRTDPELEKEAEGS</sequence>
<keyword id="KW-0025">Alternative splicing</keyword>
<keyword id="KW-0217">Developmental protein</keyword>
<keyword id="KW-0325">Glycoprotein</keyword>
<keyword id="KW-1267">Proteomics identification</keyword>
<keyword id="KW-1185">Reference proteome</keyword>
<keyword id="KW-0677">Repeat</keyword>
<keyword id="KW-0964">Secreted</keyword>
<keyword id="KW-0732">Signal</keyword>
<name>CHRD_HUMAN</name>
<proteinExistence type="evidence at protein level"/>
<accession>Q9H2X0</accession>
<accession>O95254</accession>
<accession>Q2M1I8</accession>
<accession>Q6UW83</accession>
<accession>Q9H2D3</accession>
<accession>Q9H2W8</accession>
<accession>Q9H2W9</accession>
<accession>Q9P0Z2</accession>
<accession>Q9P0Z3</accession>
<accession>Q9P0Z4</accession>
<accession>Q9P0Z5</accession>